<reference key="1">
    <citation type="submission" date="2004-11" db="EMBL/GenBank/DDBJ databases">
        <authorList>
            <consortium name="The German cDNA consortium"/>
        </authorList>
    </citation>
    <scope>NUCLEOTIDE SEQUENCE [LARGE SCALE MRNA]</scope>
    <source>
        <tissue>Kidney</tissue>
    </source>
</reference>
<dbReference type="EMBL" id="CR859746">
    <property type="protein sequence ID" value="CAH91904.1"/>
    <property type="molecule type" value="mRNA"/>
</dbReference>
<dbReference type="RefSeq" id="NP_001126102.1">
    <property type="nucleotide sequence ID" value="NM_001132630.1"/>
</dbReference>
<dbReference type="RefSeq" id="XP_009237982.1">
    <property type="nucleotide sequence ID" value="XM_009239707.4"/>
</dbReference>
<dbReference type="SMR" id="Q5R8K6"/>
<dbReference type="FunCoup" id="Q5R8K6">
    <property type="interactions" value="1166"/>
</dbReference>
<dbReference type="STRING" id="9601.ENSPPYP00000016170"/>
<dbReference type="Ensembl" id="ENSPPYT00000055077.1">
    <property type="protein sequence ID" value="ENSPPYP00000043881.1"/>
    <property type="gene ID" value="ENSPPYG00000030262.1"/>
</dbReference>
<dbReference type="GeneID" id="100173057"/>
<dbReference type="KEGG" id="pon:100173057"/>
<dbReference type="CTD" id="6165"/>
<dbReference type="eggNOG" id="KOG0887">
    <property type="taxonomic scope" value="Eukaryota"/>
</dbReference>
<dbReference type="GeneTree" id="ENSGT00390000016972"/>
<dbReference type="HOGENOM" id="CLU_100745_5_0_1"/>
<dbReference type="InParanoid" id="Q5R8K6"/>
<dbReference type="OMA" id="YRTNKHH"/>
<dbReference type="OrthoDB" id="9509103at2759"/>
<dbReference type="TreeFam" id="TF300104"/>
<dbReference type="Proteomes" id="UP000001595">
    <property type="component" value="Unplaced"/>
</dbReference>
<dbReference type="GO" id="GO:0022625">
    <property type="term" value="C:cytosolic large ribosomal subunit"/>
    <property type="evidence" value="ECO:0007669"/>
    <property type="project" value="Ensembl"/>
</dbReference>
<dbReference type="GO" id="GO:0003735">
    <property type="term" value="F:structural constituent of ribosome"/>
    <property type="evidence" value="ECO:0007669"/>
    <property type="project" value="Ensembl"/>
</dbReference>
<dbReference type="GO" id="GO:0000049">
    <property type="term" value="F:tRNA binding"/>
    <property type="evidence" value="ECO:0007669"/>
    <property type="project" value="UniProtKB-KW"/>
</dbReference>
<dbReference type="GO" id="GO:0042273">
    <property type="term" value="P:ribosomal large subunit biogenesis"/>
    <property type="evidence" value="ECO:0007669"/>
    <property type="project" value="Ensembl"/>
</dbReference>
<dbReference type="GO" id="GO:0006364">
    <property type="term" value="P:rRNA processing"/>
    <property type="evidence" value="ECO:0007669"/>
    <property type="project" value="Ensembl"/>
</dbReference>
<dbReference type="GO" id="GO:0006412">
    <property type="term" value="P:translation"/>
    <property type="evidence" value="ECO:0007669"/>
    <property type="project" value="InterPro"/>
</dbReference>
<dbReference type="FunFam" id="2.40.10.190:FF:000005">
    <property type="entry name" value="60S ribosomal protein L35a"/>
    <property type="match status" value="1"/>
</dbReference>
<dbReference type="Gene3D" id="2.40.10.190">
    <property type="entry name" value="translation elongation factor selb, chain A, domain 4"/>
    <property type="match status" value="1"/>
</dbReference>
<dbReference type="HAMAP" id="MF_00573">
    <property type="entry name" value="Ribosomal_eL33"/>
    <property type="match status" value="1"/>
</dbReference>
<dbReference type="InterPro" id="IPR001780">
    <property type="entry name" value="Ribosomal_eL33"/>
</dbReference>
<dbReference type="InterPro" id="IPR018266">
    <property type="entry name" value="Ribosomal_eL33_CS"/>
</dbReference>
<dbReference type="InterPro" id="IPR038661">
    <property type="entry name" value="Ribosomal_eL33_sf"/>
</dbReference>
<dbReference type="InterPro" id="IPR009000">
    <property type="entry name" value="Transl_B-barrel_sf"/>
</dbReference>
<dbReference type="PANTHER" id="PTHR10902">
    <property type="entry name" value="60S RIBOSOMAL PROTEIN L35A"/>
    <property type="match status" value="1"/>
</dbReference>
<dbReference type="Pfam" id="PF01247">
    <property type="entry name" value="Ribosomal_L35Ae"/>
    <property type="match status" value="1"/>
</dbReference>
<dbReference type="SUPFAM" id="SSF50447">
    <property type="entry name" value="Translation proteins"/>
    <property type="match status" value="1"/>
</dbReference>
<dbReference type="PROSITE" id="PS01105">
    <property type="entry name" value="RIBOSOMAL_L35AE"/>
    <property type="match status" value="1"/>
</dbReference>
<accession>Q5R8K6</accession>
<protein>
    <recommendedName>
        <fullName evidence="3">Large ribosomal subunit protein eL33</fullName>
    </recommendedName>
    <alternativeName>
        <fullName>60S ribosomal protein L35a</fullName>
    </alternativeName>
</protein>
<evidence type="ECO:0000250" key="1">
    <source>
        <dbReference type="UniProtKB" id="O55142"/>
    </source>
</evidence>
<evidence type="ECO:0000250" key="2">
    <source>
        <dbReference type="UniProtKB" id="P18077"/>
    </source>
</evidence>
<evidence type="ECO:0000305" key="3"/>
<comment type="function">
    <text evidence="2">Component of the large ribosomal subunit. The ribosome is a large ribonucleoprotein complex responsible for the synthesis of proteins in the cell. Required for the proliferation and viability of hematopoietic cells.</text>
</comment>
<comment type="subunit">
    <text evidence="2">Component of the large ribosomal subunit.</text>
</comment>
<comment type="subcellular location">
    <subcellularLocation>
        <location evidence="2">Cytoplasm</location>
    </subcellularLocation>
</comment>
<comment type="similarity">
    <text evidence="3">Belongs to the eukaryotic ribosomal protein eL33 family.</text>
</comment>
<proteinExistence type="inferred from homology"/>
<name>RL35A_PONAB</name>
<keyword id="KW-0007">Acetylation</keyword>
<keyword id="KW-0963">Cytoplasm</keyword>
<keyword id="KW-1185">Reference proteome</keyword>
<keyword id="KW-0687">Ribonucleoprotein</keyword>
<keyword id="KW-0689">Ribosomal protein</keyword>
<keyword id="KW-0694">RNA-binding</keyword>
<keyword id="KW-0820">tRNA-binding</keyword>
<sequence length="110" mass="12538">MSGRLWSKAIFAGYKRGLRNQREHTALLKIEGVYARDETEFYLGKRCAYVYKAKNNTVTPGGKPNKTRVIWGKVTRAHGNSGMVRAKFRSNLPAKAIGHRIRVMLYPSRI</sequence>
<feature type="chain" id="PRO_0000192799" description="Large ribosomal subunit protein eL33">
    <location>
        <begin position="1"/>
        <end position="110"/>
    </location>
</feature>
<feature type="modified residue" description="N6-acetyllysine" evidence="2">
    <location>
        <position position="8"/>
    </location>
</feature>
<feature type="modified residue" description="N6-acetyllysine; alternate" evidence="1">
    <location>
        <position position="63"/>
    </location>
</feature>
<feature type="modified residue" description="N6-succinyllysine; alternate" evidence="1">
    <location>
        <position position="63"/>
    </location>
</feature>
<organism>
    <name type="scientific">Pongo abelii</name>
    <name type="common">Sumatran orangutan</name>
    <name type="synonym">Pongo pygmaeus abelii</name>
    <dbReference type="NCBI Taxonomy" id="9601"/>
    <lineage>
        <taxon>Eukaryota</taxon>
        <taxon>Metazoa</taxon>
        <taxon>Chordata</taxon>
        <taxon>Craniata</taxon>
        <taxon>Vertebrata</taxon>
        <taxon>Euteleostomi</taxon>
        <taxon>Mammalia</taxon>
        <taxon>Eutheria</taxon>
        <taxon>Euarchontoglires</taxon>
        <taxon>Primates</taxon>
        <taxon>Haplorrhini</taxon>
        <taxon>Catarrhini</taxon>
        <taxon>Hominidae</taxon>
        <taxon>Pongo</taxon>
    </lineage>
</organism>
<gene>
    <name type="primary">RPL35A</name>
</gene>